<comment type="function">
    <text evidence="3">Plays an important role in the switch between viral transcription and genome replication. Once produced in sufficient amount, interacts with and inhibits the viral RNA polymerase that becomes unable to produce additional late transcripts. This lysozyme-polymerase complex in turn plays an active role in viral genome replication and packaging.</text>
</comment>
<comment type="function">
    <text evidence="3">Endolysin with amidase activity that degrades host peptidoglycans and participates with the holin and spanin proteins in the sequential events which lead to the programmed host cell lysis releasing the mature viral particles. Once the holin has permeabilized the host cell membrane, the endolysin can reach the periplasm and breaking down the peptidoglycan layer.</text>
</comment>
<comment type="catalytic activity">
    <reaction evidence="3">
        <text>Hydrolyzes the link between N-acetylmuramoyl residues and L-amino acid residues in certain cell-wall glycopeptides.</text>
        <dbReference type="EC" id="3.5.1.28"/>
    </reaction>
</comment>
<comment type="cofactor">
    <cofactor evidence="3">
        <name>Zn(2+)</name>
        <dbReference type="ChEBI" id="CHEBI:29105"/>
    </cofactor>
    <text evidence="3">Zn(2+) is required for amidase activity.</text>
</comment>
<comment type="activity regulation">
    <text evidence="3">Binding to the viral RNA polymerase inhibits amidase activity.</text>
</comment>
<comment type="subunit">
    <text evidence="3">Interacts with the viral RNA polymerase.</text>
</comment>
<comment type="subcellular location">
    <subcellularLocation>
        <location evidence="3">Host cytoplasm</location>
    </subcellularLocation>
    <text evidence="3">The endolysin is cytoplasmic, but can reach the periplasmic space with the help of the holins which disrupt the host cell membrane.</text>
</comment>
<comment type="similarity">
    <text evidence="3">Belongs to the N-acetylmuramoyl-L-alanine amidase 2 family.</text>
</comment>
<organism>
    <name type="scientific">Enterobacteria phage T3</name>
    <name type="common">Bacteriophage T3</name>
    <dbReference type="NCBI Taxonomy" id="10759"/>
    <lineage>
        <taxon>Viruses</taxon>
        <taxon>Duplodnaviria</taxon>
        <taxon>Heunggongvirae</taxon>
        <taxon>Uroviricota</taxon>
        <taxon>Caudoviricetes</taxon>
        <taxon>Autographiviridae</taxon>
        <taxon>Studiervirinae</taxon>
        <taxon>Teetrevirus</taxon>
        <taxon>Teetrevirus T3</taxon>
    </lineage>
</organism>
<gene>
    <name type="primary">3.5</name>
</gene>
<sequence length="151" mass="16874">MAKVQFKPRATTEAIFVHCSATKPSQNVGVREIRQWHKEQGWLDVGYHFIIKRDGTVEAGRDELAVGSHAKGYNHNSIGVCLVGGIDDKGKFDANFTPAQMQSLRSLLVTLLAKYEGSVLRAHHDVAPKACPSFDLKRWWEKNELVTSDRG</sequence>
<accession>P20331</accession>
<keyword id="KW-0929">Antimicrobial</keyword>
<keyword id="KW-0081">Bacteriolytic enzyme</keyword>
<keyword id="KW-0204">Cytolysis</keyword>
<keyword id="KW-0578">Host cell lysis by virus</keyword>
<keyword id="KW-1035">Host cytoplasm</keyword>
<keyword id="KW-0378">Hydrolase</keyword>
<keyword id="KW-0426">Late protein</keyword>
<keyword id="KW-0479">Metal-binding</keyword>
<keyword id="KW-1188">Viral release from host cell</keyword>
<keyword id="KW-0862">Zinc</keyword>
<protein>
    <recommendedName>
        <fullName evidence="3">Endolysin</fullName>
        <ecNumber evidence="3">3.5.1.28</ecNumber>
    </recommendedName>
    <alternativeName>
        <fullName evidence="3">N-acetylmuramoyl-L-alanine amidase</fullName>
    </alternativeName>
    <alternativeName>
        <fullName>T3 lysozyme</fullName>
    </alternativeName>
</protein>
<feature type="initiator methionine" description="Removed; by host" evidence="1">
    <location>
        <position position="1"/>
    </location>
</feature>
<feature type="chain" id="PRO_0000164409" description="Endolysin">
    <location>
        <begin position="2"/>
        <end position="151"/>
    </location>
</feature>
<feature type="domain" description="N-acetylmuramoyl-L-alanine amidase" evidence="2">
    <location>
        <begin position="11"/>
        <end position="132"/>
    </location>
</feature>
<feature type="binding site" evidence="3">
    <location>
        <position position="18"/>
    </location>
    <ligand>
        <name>Zn(2+)</name>
        <dbReference type="ChEBI" id="CHEBI:29105"/>
    </ligand>
</feature>
<feature type="binding site" evidence="3">
    <location>
        <position position="123"/>
    </location>
    <ligand>
        <name>Zn(2+)</name>
        <dbReference type="ChEBI" id="CHEBI:29105"/>
    </ligand>
</feature>
<feature type="binding site" evidence="3">
    <location>
        <position position="131"/>
    </location>
    <ligand>
        <name>Zn(2+)</name>
        <dbReference type="ChEBI" id="CHEBI:29105"/>
    </ligand>
</feature>
<feature type="site" description="Essential for amidase activity and zinc hydrate coordination" evidence="3">
    <location>
        <position position="47"/>
    </location>
</feature>
<organismHost>
    <name type="scientific">Escherichia coli</name>
    <dbReference type="NCBI Taxonomy" id="562"/>
</organismHost>
<proteinExistence type="inferred from homology"/>
<name>ENLYS_BPT3</name>
<evidence type="ECO:0000250" key="1"/>
<evidence type="ECO:0000255" key="2"/>
<evidence type="ECO:0000255" key="3">
    <source>
        <dbReference type="HAMAP-Rule" id="MF_04111"/>
    </source>
</evidence>
<dbReference type="EC" id="3.5.1.28" evidence="3"/>
<dbReference type="EMBL" id="X17255">
    <property type="protein sequence ID" value="CAA35133.1"/>
    <property type="molecule type" value="Genomic_DNA"/>
</dbReference>
<dbReference type="PIR" id="S07506">
    <property type="entry name" value="S07506"/>
</dbReference>
<dbReference type="RefSeq" id="NP_523313.1">
    <property type="nucleotide sequence ID" value="NC_003298.1"/>
</dbReference>
<dbReference type="SMR" id="P20331"/>
<dbReference type="KEGG" id="vg:927411"/>
<dbReference type="OrthoDB" id="13080at10239"/>
<dbReference type="GO" id="GO:0030430">
    <property type="term" value="C:host cell cytoplasm"/>
    <property type="evidence" value="ECO:0007669"/>
    <property type="project" value="UniProtKB-SubCell"/>
</dbReference>
<dbReference type="GO" id="GO:0008745">
    <property type="term" value="F:N-acetylmuramoyl-L-alanine amidase activity"/>
    <property type="evidence" value="ECO:0007669"/>
    <property type="project" value="UniProtKB-UniRule"/>
</dbReference>
<dbReference type="GO" id="GO:0008270">
    <property type="term" value="F:zinc ion binding"/>
    <property type="evidence" value="ECO:0007669"/>
    <property type="project" value="InterPro"/>
</dbReference>
<dbReference type="GO" id="GO:0042742">
    <property type="term" value="P:defense response to bacterium"/>
    <property type="evidence" value="ECO:0007669"/>
    <property type="project" value="UniProtKB-KW"/>
</dbReference>
<dbReference type="GO" id="GO:0032897">
    <property type="term" value="P:negative regulation of viral transcription"/>
    <property type="evidence" value="ECO:0007669"/>
    <property type="project" value="InterPro"/>
</dbReference>
<dbReference type="GO" id="GO:0009253">
    <property type="term" value="P:peptidoglycan catabolic process"/>
    <property type="evidence" value="ECO:0007669"/>
    <property type="project" value="UniProtKB-UniRule"/>
</dbReference>
<dbReference type="GO" id="GO:0044659">
    <property type="term" value="P:viral release from host cell by cytolysis"/>
    <property type="evidence" value="ECO:0007669"/>
    <property type="project" value="UniProtKB-UniRule"/>
</dbReference>
<dbReference type="CDD" id="cd06583">
    <property type="entry name" value="PGRP"/>
    <property type="match status" value="1"/>
</dbReference>
<dbReference type="FunFam" id="3.40.80.10:FF:000009">
    <property type="entry name" value="Endolysin"/>
    <property type="match status" value="1"/>
</dbReference>
<dbReference type="Gene3D" id="3.40.80.10">
    <property type="entry name" value="Peptidoglycan recognition protein-like"/>
    <property type="match status" value="1"/>
</dbReference>
<dbReference type="HAMAP" id="MF_04111">
    <property type="entry name" value="ENDOLYSIN_T7"/>
    <property type="match status" value="1"/>
</dbReference>
<dbReference type="InterPro" id="IPR036505">
    <property type="entry name" value="Amidase/PGRP_sf"/>
</dbReference>
<dbReference type="InterPro" id="IPR002502">
    <property type="entry name" value="Amidase_domain"/>
</dbReference>
<dbReference type="InterPro" id="IPR034689">
    <property type="entry name" value="Endolysin_T7_type"/>
</dbReference>
<dbReference type="InterPro" id="IPR015510">
    <property type="entry name" value="PGRP"/>
</dbReference>
<dbReference type="InterPro" id="IPR006619">
    <property type="entry name" value="PGRP_domain_met/bac"/>
</dbReference>
<dbReference type="PANTHER" id="PTHR11022">
    <property type="entry name" value="PEPTIDOGLYCAN RECOGNITION PROTEIN"/>
    <property type="match status" value="1"/>
</dbReference>
<dbReference type="PANTHER" id="PTHR11022:SF41">
    <property type="entry name" value="PEPTIDOGLYCAN-RECOGNITION PROTEIN LC-RELATED"/>
    <property type="match status" value="1"/>
</dbReference>
<dbReference type="Pfam" id="PF01510">
    <property type="entry name" value="Amidase_2"/>
    <property type="match status" value="1"/>
</dbReference>
<dbReference type="SMART" id="SM00644">
    <property type="entry name" value="Ami_2"/>
    <property type="match status" value="1"/>
</dbReference>
<dbReference type="SMART" id="SM00701">
    <property type="entry name" value="PGRP"/>
    <property type="match status" value="1"/>
</dbReference>
<dbReference type="SUPFAM" id="SSF55846">
    <property type="entry name" value="N-acetylmuramoyl-L-alanine amidase-like"/>
    <property type="match status" value="1"/>
</dbReference>
<reference key="1">
    <citation type="journal article" date="1989" name="J. Mol. Biol.">
        <title>Sequence of bacteriophage T3 DNA from gene 2.5 through gene 9.</title>
        <authorList>
            <person name="Beck P.J."/>
            <person name="Gonzalez S."/>
            <person name="Ward C.L."/>
            <person name="Molineux I.J."/>
        </authorList>
    </citation>
    <scope>NUCLEOTIDE SEQUENCE [GENOMIC DNA]</scope>
    <source>
        <strain>Luria</strain>
    </source>
</reference>